<organismHost>
    <name type="scientific">Ornithodoros</name>
    <name type="common">relapsing fever ticks</name>
    <dbReference type="NCBI Taxonomy" id="6937"/>
</organismHost>
<organismHost>
    <name type="scientific">Phacochoerus aethiopicus</name>
    <name type="common">Warthog</name>
    <dbReference type="NCBI Taxonomy" id="85517"/>
</organismHost>
<organismHost>
    <name type="scientific">Phacochoerus africanus</name>
    <name type="common">Warthog</name>
    <dbReference type="NCBI Taxonomy" id="41426"/>
</organismHost>
<organismHost>
    <name type="scientific">Potamochoerus larvatus</name>
    <name type="common">Bushpig</name>
    <dbReference type="NCBI Taxonomy" id="273792"/>
</organismHost>
<organismHost>
    <name type="scientific">Sus scrofa</name>
    <name type="common">Pig</name>
    <dbReference type="NCBI Taxonomy" id="9823"/>
</organismHost>
<comment type="subcellular location">
    <subcellularLocation>
        <location evidence="3">Host membrane</location>
        <topology evidence="3">Single-pass membrane protein</topology>
    </subcellularLocation>
</comment>
<comment type="induction">
    <text evidence="3">Expressed in the late phase of the viral replicative cycle.</text>
</comment>
<comment type="similarity">
    <text evidence="3">Belongs to the asfivirus B475L family.</text>
</comment>
<comment type="sequence caution" evidence="3">
    <conflict type="erroneous initiation">
        <sequence resource="EMBL-CDS" id="AAL31331"/>
    </conflict>
    <text>Truncated N-terminus.</text>
</comment>
<comment type="sequence caution" evidence="3">
    <conflict type="frameshift">
        <sequence resource="EMBL-CDS" id="AAL31331"/>
    </conflict>
</comment>
<gene>
    <name type="ordered locus">Mal-085</name>
    <name type="ORF">L09NL</name>
</gene>
<keyword id="KW-0175">Coiled coil</keyword>
<keyword id="KW-0325">Glycoprotein</keyword>
<keyword id="KW-1043">Host membrane</keyword>
<keyword id="KW-0426">Late protein</keyword>
<keyword id="KW-0472">Membrane</keyword>
<keyword id="KW-0812">Transmembrane</keyword>
<keyword id="KW-1133">Transmembrane helix</keyword>
<proteinExistence type="inferred from homology"/>
<dbReference type="EMBL" id="L00966">
    <property type="protein sequence ID" value="AAL31331.1"/>
    <property type="status" value="ALT_SEQ"/>
    <property type="molecule type" value="Genomic_DNA"/>
</dbReference>
<dbReference type="EMBL" id="AY261361">
    <property type="status" value="NOT_ANNOTATED_CDS"/>
    <property type="molecule type" value="Genomic_DNA"/>
</dbReference>
<dbReference type="SMR" id="Q8V9T2"/>
<dbReference type="Proteomes" id="UP000000860">
    <property type="component" value="Segment"/>
</dbReference>
<dbReference type="GO" id="GO:0033644">
    <property type="term" value="C:host cell membrane"/>
    <property type="evidence" value="ECO:0007669"/>
    <property type="project" value="UniProtKB-SubCell"/>
</dbReference>
<dbReference type="GO" id="GO:0016020">
    <property type="term" value="C:membrane"/>
    <property type="evidence" value="ECO:0007669"/>
    <property type="project" value="UniProtKB-KW"/>
</dbReference>
<protein>
    <recommendedName>
        <fullName>Uncharacterized protein B475L</fullName>
        <shortName>pB475L</shortName>
    </recommendedName>
</protein>
<reference key="1">
    <citation type="submission" date="2001-11" db="EMBL/GenBank/DDBJ databases">
        <title>Nucleotide sequence and analysis of 16.25 kilobase pairs of the African swine fever virus genome that span the central variable region.</title>
        <authorList>
            <person name="Roberts P.C."/>
            <person name="Lu Z."/>
            <person name="Rock D.L."/>
        </authorList>
    </citation>
    <scope>NUCLEOTIDE SEQUENCE [GENOMIC DNA]</scope>
</reference>
<reference key="2">
    <citation type="submission" date="2003-03" db="EMBL/GenBank/DDBJ databases">
        <title>African swine fever virus genomes.</title>
        <authorList>
            <person name="Kutish G.F."/>
            <person name="Rock D.L."/>
        </authorList>
    </citation>
    <scope>NUCLEOTIDE SEQUENCE [LARGE SCALE GENOMIC DNA]</scope>
</reference>
<feature type="chain" id="PRO_0000373697" description="Uncharacterized protein B475L">
    <location>
        <begin position="1"/>
        <end position="486"/>
    </location>
</feature>
<feature type="transmembrane region" description="Helical" evidence="1">
    <location>
        <begin position="7"/>
        <end position="28"/>
    </location>
</feature>
<feature type="region of interest" description="Disordered" evidence="2">
    <location>
        <begin position="299"/>
        <end position="329"/>
    </location>
</feature>
<feature type="coiled-coil region" evidence="1">
    <location>
        <begin position="183"/>
        <end position="233"/>
    </location>
</feature>
<feature type="compositionally biased region" description="Polar residues" evidence="2">
    <location>
        <begin position="300"/>
        <end position="323"/>
    </location>
</feature>
<feature type="glycosylation site" description="N-linked (GlcNAc...) asparagine; by host" evidence="1">
    <location>
        <position position="73"/>
    </location>
</feature>
<feature type="glycosylation site" description="N-linked (GlcNAc...) asparagine; by host" evidence="1">
    <location>
        <position position="83"/>
    </location>
</feature>
<feature type="glycosylation site" description="N-linked (GlcNAc...) asparagine; by host" evidence="1">
    <location>
        <position position="195"/>
    </location>
</feature>
<feature type="glycosylation site" description="N-linked (GlcNAc...) asparagine; by host" evidence="1">
    <location>
        <position position="461"/>
    </location>
</feature>
<feature type="sequence conflict" description="In Ref. 1; AAL31331." evidence="3" ref="1">
    <original>E</original>
    <variation>G</variation>
    <location>
        <position position="41"/>
    </location>
</feature>
<accession>Q8V9T2</accession>
<sequence>MDQEESHVISIFETVGAYFINIFYNFLYKNALYKKHSIVMEYQYQVKGYILGVKQNKKLYEKMLDSFYKYFCNITQINSKTLNFSNFVSTIVDSFLPKEYSQSISLEKKDSILELLLCDYISNLGTFITTEKMLPFIVKNRKENYHKVTKEMQDYSLTFLLKKRMELYNKFLRKQAYVEPETELEETYARLSSYNRSLLYQIEELTSEKKSFLEELSTLRKKYEKRQSEYRRLVQLLYQQIQRSSSSKTSYPLTKFIETLPSEHFSNEEYQKEASADQKVILREQEETELLREQELLASQEVTSKSPNNYPVPQSRTIVNKPSDNYPVPRSRSTKIDFDNSLQKQELHAKNGFSEKAIVEFNQDKQPMFKEEAIVEFNQDKPEIKEETIVEFNQNKQPMFKEEAILEFNQDKQPEFKETILDNKEILDNKEDILEEENQDEPIVQNPFLENFWKPEQKTFNQSGLFEESSDFSNDWSGGDVTLNFS</sequence>
<name>VF475_ASFM2</name>
<organism>
    <name type="scientific">African swine fever virus (isolate Tick/Malawi/Lil 20-1/1983)</name>
    <name type="common">ASFV</name>
    <dbReference type="NCBI Taxonomy" id="10500"/>
    <lineage>
        <taxon>Viruses</taxon>
        <taxon>Varidnaviria</taxon>
        <taxon>Bamfordvirae</taxon>
        <taxon>Nucleocytoviricota</taxon>
        <taxon>Pokkesviricetes</taxon>
        <taxon>Asfuvirales</taxon>
        <taxon>Asfarviridae</taxon>
        <taxon>Asfivirus</taxon>
        <taxon>African swine fever virus</taxon>
    </lineage>
</organism>
<evidence type="ECO:0000255" key="1"/>
<evidence type="ECO:0000256" key="2">
    <source>
        <dbReference type="SAM" id="MobiDB-lite"/>
    </source>
</evidence>
<evidence type="ECO:0000305" key="3"/>